<evidence type="ECO:0000255" key="1">
    <source>
        <dbReference type="HAMAP-Rule" id="MF_01341"/>
    </source>
</evidence>
<evidence type="ECO:0000256" key="2">
    <source>
        <dbReference type="SAM" id="MobiDB-lite"/>
    </source>
</evidence>
<evidence type="ECO:0000305" key="3"/>
<protein>
    <recommendedName>
        <fullName evidence="1">Large ribosomal subunit protein uL15</fullName>
    </recommendedName>
    <alternativeName>
        <fullName evidence="3">50S ribosomal protein L15</fullName>
    </alternativeName>
</protein>
<sequence>MKLHELKPAEGSRKVRNRVGRGTSSGNGKTSGRGQKGQKARSGGGVRLGFEGGQTPLFRRMPKRGFSNINAKEYALVNLDQLNVFEDGTEVTPVVLKEAGIVRAEKSGVKILGNGELTKKLSVKAAKFSKSAEAAITAKGGSIEVI</sequence>
<name>RL15_STRA1</name>
<keyword id="KW-0687">Ribonucleoprotein</keyword>
<keyword id="KW-0689">Ribosomal protein</keyword>
<keyword id="KW-0694">RNA-binding</keyword>
<keyword id="KW-0699">rRNA-binding</keyword>
<accession>Q3K3V0</accession>
<comment type="function">
    <text evidence="1">Binds to the 23S rRNA.</text>
</comment>
<comment type="subunit">
    <text evidence="1">Part of the 50S ribosomal subunit.</text>
</comment>
<comment type="similarity">
    <text evidence="1">Belongs to the universal ribosomal protein uL15 family.</text>
</comment>
<organism>
    <name type="scientific">Streptococcus agalactiae serotype Ia (strain ATCC 27591 / A909 / CDC SS700)</name>
    <dbReference type="NCBI Taxonomy" id="205921"/>
    <lineage>
        <taxon>Bacteria</taxon>
        <taxon>Bacillati</taxon>
        <taxon>Bacillota</taxon>
        <taxon>Bacilli</taxon>
        <taxon>Lactobacillales</taxon>
        <taxon>Streptococcaceae</taxon>
        <taxon>Streptococcus</taxon>
    </lineage>
</organism>
<reference key="1">
    <citation type="journal article" date="2005" name="Proc. Natl. Acad. Sci. U.S.A.">
        <title>Genome analysis of multiple pathogenic isolates of Streptococcus agalactiae: implications for the microbial 'pan-genome'.</title>
        <authorList>
            <person name="Tettelin H."/>
            <person name="Masignani V."/>
            <person name="Cieslewicz M.J."/>
            <person name="Donati C."/>
            <person name="Medini D."/>
            <person name="Ward N.L."/>
            <person name="Angiuoli S.V."/>
            <person name="Crabtree J."/>
            <person name="Jones A.L."/>
            <person name="Durkin A.S."/>
            <person name="DeBoy R.T."/>
            <person name="Davidsen T.M."/>
            <person name="Mora M."/>
            <person name="Scarselli M."/>
            <person name="Margarit y Ros I."/>
            <person name="Peterson J.D."/>
            <person name="Hauser C.R."/>
            <person name="Sundaram J.P."/>
            <person name="Nelson W.C."/>
            <person name="Madupu R."/>
            <person name="Brinkac L.M."/>
            <person name="Dodson R.J."/>
            <person name="Rosovitz M.J."/>
            <person name="Sullivan S.A."/>
            <person name="Daugherty S.C."/>
            <person name="Haft D.H."/>
            <person name="Selengut J."/>
            <person name="Gwinn M.L."/>
            <person name="Zhou L."/>
            <person name="Zafar N."/>
            <person name="Khouri H."/>
            <person name="Radune D."/>
            <person name="Dimitrov G."/>
            <person name="Watkins K."/>
            <person name="O'Connor K.J."/>
            <person name="Smith S."/>
            <person name="Utterback T.R."/>
            <person name="White O."/>
            <person name="Rubens C.E."/>
            <person name="Grandi G."/>
            <person name="Madoff L.C."/>
            <person name="Kasper D.L."/>
            <person name="Telford J.L."/>
            <person name="Wessels M.R."/>
            <person name="Rappuoli R."/>
            <person name="Fraser C.M."/>
        </authorList>
    </citation>
    <scope>NUCLEOTIDE SEQUENCE [LARGE SCALE GENOMIC DNA]</scope>
    <source>
        <strain>ATCC 27591 / A909 / CDC SS700</strain>
    </source>
</reference>
<gene>
    <name evidence="1" type="primary">rplO</name>
    <name type="ordered locus">SAK_0110</name>
</gene>
<feature type="chain" id="PRO_0000251568" description="Large ribosomal subunit protein uL15">
    <location>
        <begin position="1"/>
        <end position="146"/>
    </location>
</feature>
<feature type="region of interest" description="Disordered" evidence="2">
    <location>
        <begin position="1"/>
        <end position="59"/>
    </location>
</feature>
<feature type="compositionally biased region" description="Basic and acidic residues" evidence="2">
    <location>
        <begin position="1"/>
        <end position="13"/>
    </location>
</feature>
<feature type="compositionally biased region" description="Gly residues" evidence="2">
    <location>
        <begin position="23"/>
        <end position="35"/>
    </location>
</feature>
<feature type="compositionally biased region" description="Gly residues" evidence="2">
    <location>
        <begin position="42"/>
        <end position="52"/>
    </location>
</feature>
<proteinExistence type="inferred from homology"/>
<dbReference type="EMBL" id="CP000114">
    <property type="protein sequence ID" value="ABA45320.1"/>
    <property type="molecule type" value="Genomic_DNA"/>
</dbReference>
<dbReference type="RefSeq" id="WP_000766093.1">
    <property type="nucleotide sequence ID" value="NC_007432.1"/>
</dbReference>
<dbReference type="SMR" id="Q3K3V0"/>
<dbReference type="GeneID" id="66885037"/>
<dbReference type="KEGG" id="sak:SAK_0110"/>
<dbReference type="HOGENOM" id="CLU_055188_4_2_9"/>
<dbReference type="GO" id="GO:0022625">
    <property type="term" value="C:cytosolic large ribosomal subunit"/>
    <property type="evidence" value="ECO:0007669"/>
    <property type="project" value="TreeGrafter"/>
</dbReference>
<dbReference type="GO" id="GO:0019843">
    <property type="term" value="F:rRNA binding"/>
    <property type="evidence" value="ECO:0007669"/>
    <property type="project" value="UniProtKB-UniRule"/>
</dbReference>
<dbReference type="GO" id="GO:0003735">
    <property type="term" value="F:structural constituent of ribosome"/>
    <property type="evidence" value="ECO:0007669"/>
    <property type="project" value="InterPro"/>
</dbReference>
<dbReference type="GO" id="GO:0006412">
    <property type="term" value="P:translation"/>
    <property type="evidence" value="ECO:0007669"/>
    <property type="project" value="UniProtKB-UniRule"/>
</dbReference>
<dbReference type="Gene3D" id="3.100.10.10">
    <property type="match status" value="1"/>
</dbReference>
<dbReference type="HAMAP" id="MF_01341">
    <property type="entry name" value="Ribosomal_uL15"/>
    <property type="match status" value="1"/>
</dbReference>
<dbReference type="InterPro" id="IPR030878">
    <property type="entry name" value="Ribosomal_uL15"/>
</dbReference>
<dbReference type="InterPro" id="IPR021131">
    <property type="entry name" value="Ribosomal_uL15/eL18"/>
</dbReference>
<dbReference type="InterPro" id="IPR036227">
    <property type="entry name" value="Ribosomal_uL15/eL18_sf"/>
</dbReference>
<dbReference type="InterPro" id="IPR005749">
    <property type="entry name" value="Ribosomal_uL15_bac-type"/>
</dbReference>
<dbReference type="InterPro" id="IPR001196">
    <property type="entry name" value="Ribosomal_uL15_CS"/>
</dbReference>
<dbReference type="NCBIfam" id="TIGR01071">
    <property type="entry name" value="rplO_bact"/>
    <property type="match status" value="1"/>
</dbReference>
<dbReference type="PANTHER" id="PTHR12934">
    <property type="entry name" value="50S RIBOSOMAL PROTEIN L15"/>
    <property type="match status" value="1"/>
</dbReference>
<dbReference type="PANTHER" id="PTHR12934:SF11">
    <property type="entry name" value="LARGE RIBOSOMAL SUBUNIT PROTEIN UL15M"/>
    <property type="match status" value="1"/>
</dbReference>
<dbReference type="Pfam" id="PF00828">
    <property type="entry name" value="Ribosomal_L27A"/>
    <property type="match status" value="1"/>
</dbReference>
<dbReference type="SUPFAM" id="SSF52080">
    <property type="entry name" value="Ribosomal proteins L15p and L18e"/>
    <property type="match status" value="1"/>
</dbReference>
<dbReference type="PROSITE" id="PS00475">
    <property type="entry name" value="RIBOSOMAL_L15"/>
    <property type="match status" value="1"/>
</dbReference>